<proteinExistence type="inferred from homology"/>
<gene>
    <name evidence="1" type="primary">groES</name>
    <name evidence="1" type="synonym">groS</name>
    <name type="ordered locus">Rsph17025_2190</name>
</gene>
<comment type="function">
    <text evidence="1">Together with the chaperonin GroEL, plays an essential role in assisting protein folding. The GroEL-GroES system forms a nano-cage that allows encapsulation of the non-native substrate proteins and provides a physical environment optimized to promote and accelerate protein folding. GroES binds to the apical surface of the GroEL ring, thereby capping the opening of the GroEL channel.</text>
</comment>
<comment type="subunit">
    <text evidence="1">Heptamer of 7 subunits arranged in a ring. Interacts with the chaperonin GroEL.</text>
</comment>
<comment type="subcellular location">
    <subcellularLocation>
        <location evidence="1">Cytoplasm</location>
    </subcellularLocation>
</comment>
<comment type="similarity">
    <text evidence="1">Belongs to the GroES chaperonin family.</text>
</comment>
<keyword id="KW-0143">Chaperone</keyword>
<keyword id="KW-0963">Cytoplasm</keyword>
<protein>
    <recommendedName>
        <fullName evidence="1">Co-chaperonin GroES</fullName>
    </recommendedName>
    <alternativeName>
        <fullName evidence="1">10 kDa chaperonin</fullName>
    </alternativeName>
    <alternativeName>
        <fullName evidence="1">Chaperonin-10</fullName>
        <shortName evidence="1">Cpn10</shortName>
    </alternativeName>
</protein>
<reference key="1">
    <citation type="submission" date="2007-04" db="EMBL/GenBank/DDBJ databases">
        <title>Complete sequence of chromosome of Rhodobacter sphaeroides ATCC 17025.</title>
        <authorList>
            <consortium name="US DOE Joint Genome Institute"/>
            <person name="Copeland A."/>
            <person name="Lucas S."/>
            <person name="Lapidus A."/>
            <person name="Barry K."/>
            <person name="Detter J.C."/>
            <person name="Glavina del Rio T."/>
            <person name="Hammon N."/>
            <person name="Israni S."/>
            <person name="Dalin E."/>
            <person name="Tice H."/>
            <person name="Pitluck S."/>
            <person name="Chertkov O."/>
            <person name="Brettin T."/>
            <person name="Bruce D."/>
            <person name="Han C."/>
            <person name="Schmutz J."/>
            <person name="Larimer F."/>
            <person name="Land M."/>
            <person name="Hauser L."/>
            <person name="Kyrpides N."/>
            <person name="Kim E."/>
            <person name="Richardson P."/>
            <person name="Mackenzie C."/>
            <person name="Choudhary M."/>
            <person name="Donohue T.J."/>
            <person name="Kaplan S."/>
        </authorList>
    </citation>
    <scope>NUCLEOTIDE SEQUENCE [LARGE SCALE GENOMIC DNA]</scope>
    <source>
        <strain>ATCC 17025 / ATH 2.4.3</strain>
    </source>
</reference>
<organism>
    <name type="scientific">Cereibacter sphaeroides (strain ATCC 17025 / ATH 2.4.3)</name>
    <name type="common">Rhodobacter sphaeroides</name>
    <dbReference type="NCBI Taxonomy" id="349102"/>
    <lineage>
        <taxon>Bacteria</taxon>
        <taxon>Pseudomonadati</taxon>
        <taxon>Pseudomonadota</taxon>
        <taxon>Alphaproteobacteria</taxon>
        <taxon>Rhodobacterales</taxon>
        <taxon>Paracoccaceae</taxon>
        <taxon>Cereibacter</taxon>
    </lineage>
</organism>
<feature type="chain" id="PRO_1000025350" description="Co-chaperonin GroES">
    <location>
        <begin position="1"/>
        <end position="95"/>
    </location>
</feature>
<dbReference type="EMBL" id="CP000661">
    <property type="protein sequence ID" value="ABP71080.1"/>
    <property type="molecule type" value="Genomic_DNA"/>
</dbReference>
<dbReference type="SMR" id="A4WUL6"/>
<dbReference type="STRING" id="349102.Rsph17025_2190"/>
<dbReference type="KEGG" id="rsq:Rsph17025_2190"/>
<dbReference type="eggNOG" id="COG0234">
    <property type="taxonomic scope" value="Bacteria"/>
</dbReference>
<dbReference type="HOGENOM" id="CLU_132825_1_0_5"/>
<dbReference type="BioCyc" id="RSPH349102:G1G8M-2259-MONOMER"/>
<dbReference type="GO" id="GO:0005737">
    <property type="term" value="C:cytoplasm"/>
    <property type="evidence" value="ECO:0007669"/>
    <property type="project" value="UniProtKB-SubCell"/>
</dbReference>
<dbReference type="GO" id="GO:0005524">
    <property type="term" value="F:ATP binding"/>
    <property type="evidence" value="ECO:0007669"/>
    <property type="project" value="InterPro"/>
</dbReference>
<dbReference type="GO" id="GO:0046872">
    <property type="term" value="F:metal ion binding"/>
    <property type="evidence" value="ECO:0007669"/>
    <property type="project" value="TreeGrafter"/>
</dbReference>
<dbReference type="GO" id="GO:0044183">
    <property type="term" value="F:protein folding chaperone"/>
    <property type="evidence" value="ECO:0007669"/>
    <property type="project" value="InterPro"/>
</dbReference>
<dbReference type="GO" id="GO:0051087">
    <property type="term" value="F:protein-folding chaperone binding"/>
    <property type="evidence" value="ECO:0007669"/>
    <property type="project" value="TreeGrafter"/>
</dbReference>
<dbReference type="GO" id="GO:0051082">
    <property type="term" value="F:unfolded protein binding"/>
    <property type="evidence" value="ECO:0007669"/>
    <property type="project" value="TreeGrafter"/>
</dbReference>
<dbReference type="GO" id="GO:0051085">
    <property type="term" value="P:chaperone cofactor-dependent protein refolding"/>
    <property type="evidence" value="ECO:0007669"/>
    <property type="project" value="TreeGrafter"/>
</dbReference>
<dbReference type="CDD" id="cd00320">
    <property type="entry name" value="cpn10"/>
    <property type="match status" value="1"/>
</dbReference>
<dbReference type="FunFam" id="2.30.33.40:FF:000001">
    <property type="entry name" value="10 kDa chaperonin"/>
    <property type="match status" value="1"/>
</dbReference>
<dbReference type="Gene3D" id="2.30.33.40">
    <property type="entry name" value="GroES chaperonin"/>
    <property type="match status" value="1"/>
</dbReference>
<dbReference type="HAMAP" id="MF_00580">
    <property type="entry name" value="CH10"/>
    <property type="match status" value="1"/>
</dbReference>
<dbReference type="InterPro" id="IPR020818">
    <property type="entry name" value="Chaperonin_GroES"/>
</dbReference>
<dbReference type="InterPro" id="IPR037124">
    <property type="entry name" value="Chaperonin_GroES_sf"/>
</dbReference>
<dbReference type="InterPro" id="IPR018369">
    <property type="entry name" value="Chaprnonin_Cpn10_CS"/>
</dbReference>
<dbReference type="InterPro" id="IPR011032">
    <property type="entry name" value="GroES-like_sf"/>
</dbReference>
<dbReference type="NCBIfam" id="NF001527">
    <property type="entry name" value="PRK00364.1-2"/>
    <property type="match status" value="1"/>
</dbReference>
<dbReference type="NCBIfam" id="NF001529">
    <property type="entry name" value="PRK00364.1-5"/>
    <property type="match status" value="1"/>
</dbReference>
<dbReference type="NCBIfam" id="NF001531">
    <property type="entry name" value="PRK00364.2-2"/>
    <property type="match status" value="1"/>
</dbReference>
<dbReference type="NCBIfam" id="NF001533">
    <property type="entry name" value="PRK00364.2-4"/>
    <property type="match status" value="1"/>
</dbReference>
<dbReference type="PANTHER" id="PTHR10772">
    <property type="entry name" value="10 KDA HEAT SHOCK PROTEIN"/>
    <property type="match status" value="1"/>
</dbReference>
<dbReference type="PANTHER" id="PTHR10772:SF58">
    <property type="entry name" value="CO-CHAPERONIN GROES"/>
    <property type="match status" value="1"/>
</dbReference>
<dbReference type="Pfam" id="PF00166">
    <property type="entry name" value="Cpn10"/>
    <property type="match status" value="1"/>
</dbReference>
<dbReference type="PRINTS" id="PR00297">
    <property type="entry name" value="CHAPERONIN10"/>
</dbReference>
<dbReference type="SMART" id="SM00883">
    <property type="entry name" value="Cpn10"/>
    <property type="match status" value="1"/>
</dbReference>
<dbReference type="SUPFAM" id="SSF50129">
    <property type="entry name" value="GroES-like"/>
    <property type="match status" value="1"/>
</dbReference>
<dbReference type="PROSITE" id="PS00681">
    <property type="entry name" value="CHAPERONINS_CPN10"/>
    <property type="match status" value="1"/>
</dbReference>
<evidence type="ECO:0000255" key="1">
    <source>
        <dbReference type="HAMAP-Rule" id="MF_00580"/>
    </source>
</evidence>
<sequence length="95" mass="10181">MAFKPLHDRVLVRRVQSDEKTKGGLIIPDTAKEKPAEGEVVACGEGARKDSGELIAMSVKAGDRVLFGKWSGTEVTIDGAELLIMKESDILGILS</sequence>
<accession>A4WUL6</accession>
<name>CH10_CERS5</name>